<dbReference type="EC" id="3.4.21.92" evidence="1"/>
<dbReference type="EMBL" id="BX908798">
    <property type="protein sequence ID" value="CAF23167.1"/>
    <property type="molecule type" value="Genomic_DNA"/>
</dbReference>
<dbReference type="SMR" id="Q6ME32"/>
<dbReference type="STRING" id="264201.pc0443"/>
<dbReference type="MEROPS" id="S14.005"/>
<dbReference type="eggNOG" id="COG0740">
    <property type="taxonomic scope" value="Bacteria"/>
</dbReference>
<dbReference type="HOGENOM" id="CLU_058707_4_0_0"/>
<dbReference type="Proteomes" id="UP000000529">
    <property type="component" value="Chromosome"/>
</dbReference>
<dbReference type="GO" id="GO:0005737">
    <property type="term" value="C:cytoplasm"/>
    <property type="evidence" value="ECO:0007669"/>
    <property type="project" value="UniProtKB-SubCell"/>
</dbReference>
<dbReference type="GO" id="GO:0009368">
    <property type="term" value="C:endopeptidase Clp complex"/>
    <property type="evidence" value="ECO:0007669"/>
    <property type="project" value="TreeGrafter"/>
</dbReference>
<dbReference type="GO" id="GO:0004176">
    <property type="term" value="F:ATP-dependent peptidase activity"/>
    <property type="evidence" value="ECO:0007669"/>
    <property type="project" value="InterPro"/>
</dbReference>
<dbReference type="GO" id="GO:0051117">
    <property type="term" value="F:ATPase binding"/>
    <property type="evidence" value="ECO:0007669"/>
    <property type="project" value="TreeGrafter"/>
</dbReference>
<dbReference type="GO" id="GO:0004252">
    <property type="term" value="F:serine-type endopeptidase activity"/>
    <property type="evidence" value="ECO:0007669"/>
    <property type="project" value="UniProtKB-UniRule"/>
</dbReference>
<dbReference type="GO" id="GO:0006515">
    <property type="term" value="P:protein quality control for misfolded or incompletely synthesized proteins"/>
    <property type="evidence" value="ECO:0007669"/>
    <property type="project" value="TreeGrafter"/>
</dbReference>
<dbReference type="CDD" id="cd07017">
    <property type="entry name" value="S14_ClpP_2"/>
    <property type="match status" value="1"/>
</dbReference>
<dbReference type="Gene3D" id="3.90.226.10">
    <property type="entry name" value="2-enoyl-CoA Hydratase, Chain A, domain 1"/>
    <property type="match status" value="1"/>
</dbReference>
<dbReference type="HAMAP" id="MF_00444">
    <property type="entry name" value="ClpP"/>
    <property type="match status" value="1"/>
</dbReference>
<dbReference type="InterPro" id="IPR001907">
    <property type="entry name" value="ClpP"/>
</dbReference>
<dbReference type="InterPro" id="IPR029045">
    <property type="entry name" value="ClpP/crotonase-like_dom_sf"/>
</dbReference>
<dbReference type="InterPro" id="IPR023562">
    <property type="entry name" value="ClpP/TepA"/>
</dbReference>
<dbReference type="InterPro" id="IPR033135">
    <property type="entry name" value="ClpP_His_AS"/>
</dbReference>
<dbReference type="NCBIfam" id="NF009205">
    <property type="entry name" value="PRK12553.1"/>
    <property type="match status" value="1"/>
</dbReference>
<dbReference type="PANTHER" id="PTHR10381">
    <property type="entry name" value="ATP-DEPENDENT CLP PROTEASE PROTEOLYTIC SUBUNIT"/>
    <property type="match status" value="1"/>
</dbReference>
<dbReference type="PANTHER" id="PTHR10381:SF11">
    <property type="entry name" value="ATP-DEPENDENT CLP PROTEASE PROTEOLYTIC SUBUNIT, MITOCHONDRIAL"/>
    <property type="match status" value="1"/>
</dbReference>
<dbReference type="Pfam" id="PF00574">
    <property type="entry name" value="CLP_protease"/>
    <property type="match status" value="1"/>
</dbReference>
<dbReference type="PRINTS" id="PR00127">
    <property type="entry name" value="CLPPROTEASEP"/>
</dbReference>
<dbReference type="SUPFAM" id="SSF52096">
    <property type="entry name" value="ClpP/crotonase"/>
    <property type="match status" value="1"/>
</dbReference>
<dbReference type="PROSITE" id="PS00382">
    <property type="entry name" value="CLP_PROTEASE_HIS"/>
    <property type="match status" value="1"/>
</dbReference>
<protein>
    <recommendedName>
        <fullName evidence="1">ATP-dependent Clp protease proteolytic subunit 1</fullName>
        <ecNumber evidence="1">3.4.21.92</ecNumber>
    </recommendedName>
    <alternativeName>
        <fullName evidence="1">Endopeptidase Clp 1</fullName>
    </alternativeName>
</protein>
<keyword id="KW-0963">Cytoplasm</keyword>
<keyword id="KW-0378">Hydrolase</keyword>
<keyword id="KW-0645">Protease</keyword>
<keyword id="KW-1185">Reference proteome</keyword>
<keyword id="KW-0720">Serine protease</keyword>
<organism>
    <name type="scientific">Protochlamydia amoebophila (strain UWE25)</name>
    <dbReference type="NCBI Taxonomy" id="264201"/>
    <lineage>
        <taxon>Bacteria</taxon>
        <taxon>Pseudomonadati</taxon>
        <taxon>Chlamydiota</taxon>
        <taxon>Chlamydiia</taxon>
        <taxon>Parachlamydiales</taxon>
        <taxon>Parachlamydiaceae</taxon>
        <taxon>Candidatus Protochlamydia</taxon>
    </lineage>
</organism>
<proteinExistence type="inferred from homology"/>
<name>CLPP1_PARUW</name>
<comment type="function">
    <text evidence="1">Cleaves peptides in various proteins in a process that requires ATP hydrolysis. Has a chymotrypsin-like activity. Plays a major role in the degradation of misfolded proteins.</text>
</comment>
<comment type="catalytic activity">
    <reaction evidence="1">
        <text>Hydrolysis of proteins to small peptides in the presence of ATP and magnesium. alpha-casein is the usual test substrate. In the absence of ATP, only oligopeptides shorter than five residues are hydrolyzed (such as succinyl-Leu-Tyr-|-NHMec, and Leu-Tyr-Leu-|-Tyr-Trp, in which cleavage of the -Tyr-|-Leu- and -Tyr-|-Trp bonds also occurs).</text>
        <dbReference type="EC" id="3.4.21.92"/>
    </reaction>
</comment>
<comment type="subunit">
    <text evidence="1">Fourteen ClpP subunits assemble into 2 heptameric rings which stack back to back to give a disk-like structure with a central cavity, resembling the structure of eukaryotic proteasomes.</text>
</comment>
<comment type="subcellular location">
    <subcellularLocation>
        <location evidence="1">Cytoplasm</location>
    </subcellularLocation>
</comment>
<comment type="similarity">
    <text evidence="1">Belongs to the peptidase S14 family.</text>
</comment>
<feature type="chain" id="PRO_0000179608" description="ATP-dependent Clp protease proteolytic subunit 1">
    <location>
        <begin position="1"/>
        <end position="206"/>
    </location>
</feature>
<feature type="active site" description="Nucleophile" evidence="1">
    <location>
        <position position="103"/>
    </location>
</feature>
<feature type="active site" evidence="1">
    <location>
        <position position="128"/>
    </location>
</feature>
<sequence>MTRETSMPKHDKNKSAIPSKMADRIEHAILDSRRIFISDAVDSGSASEIIRKLWYLELTDPGKPILFVINSPGGAVDSGFAIWDQIKMITSPVTTLVTGLAASMGSILSLCASPGRRFATPHSRIMIHQPLLSGVIKGQATDLEIQAKEMLKTRNGLIEIYVQATGKNFAAIEKAIDRDTWMTAQEALEFGLLDKVINSFEEIEST</sequence>
<gene>
    <name evidence="1" type="primary">clpP1</name>
    <name type="ordered locus">pc0443</name>
</gene>
<reference key="1">
    <citation type="journal article" date="2004" name="Science">
        <title>Illuminating the evolutionary history of chlamydiae.</title>
        <authorList>
            <person name="Horn M."/>
            <person name="Collingro A."/>
            <person name="Schmitz-Esser S."/>
            <person name="Beier C.L."/>
            <person name="Purkhold U."/>
            <person name="Fartmann B."/>
            <person name="Brandt P."/>
            <person name="Nyakatura G.J."/>
            <person name="Droege M."/>
            <person name="Frishman D."/>
            <person name="Rattei T."/>
            <person name="Mewes H.-W."/>
            <person name="Wagner M."/>
        </authorList>
    </citation>
    <scope>NUCLEOTIDE SEQUENCE [LARGE SCALE GENOMIC DNA]</scope>
    <source>
        <strain>UWE25</strain>
    </source>
</reference>
<evidence type="ECO:0000255" key="1">
    <source>
        <dbReference type="HAMAP-Rule" id="MF_00444"/>
    </source>
</evidence>
<accession>Q6ME32</accession>